<name>CLPX_METRJ</name>
<evidence type="ECO:0000255" key="1">
    <source>
        <dbReference type="HAMAP-Rule" id="MF_00175"/>
    </source>
</evidence>
<evidence type="ECO:0000255" key="2">
    <source>
        <dbReference type="PROSITE-ProRule" id="PRU01250"/>
    </source>
</evidence>
<gene>
    <name evidence="1" type="primary">clpX</name>
    <name type="ordered locus">Mrad2831_5135</name>
</gene>
<comment type="function">
    <text evidence="1">ATP-dependent specificity component of the Clp protease. It directs the protease to specific substrates. Can perform chaperone functions in the absence of ClpP.</text>
</comment>
<comment type="subunit">
    <text evidence="1">Component of the ClpX-ClpP complex. Forms a hexameric ring that, in the presence of ATP, binds to fourteen ClpP subunits assembled into a disk-like structure with a central cavity, resembling the structure of eukaryotic proteasomes.</text>
</comment>
<comment type="similarity">
    <text evidence="1">Belongs to the ClpX chaperone family.</text>
</comment>
<dbReference type="EMBL" id="CP001001">
    <property type="protein sequence ID" value="ACB27092.1"/>
    <property type="molecule type" value="Genomic_DNA"/>
</dbReference>
<dbReference type="RefSeq" id="WP_010684321.1">
    <property type="nucleotide sequence ID" value="NC_010505.1"/>
</dbReference>
<dbReference type="SMR" id="B1LW29"/>
<dbReference type="STRING" id="426355.Mrad2831_5135"/>
<dbReference type="GeneID" id="6141204"/>
<dbReference type="KEGG" id="mrd:Mrad2831_5135"/>
<dbReference type="eggNOG" id="COG1219">
    <property type="taxonomic scope" value="Bacteria"/>
</dbReference>
<dbReference type="HOGENOM" id="CLU_014218_8_2_5"/>
<dbReference type="OrthoDB" id="9804062at2"/>
<dbReference type="Proteomes" id="UP000006589">
    <property type="component" value="Chromosome"/>
</dbReference>
<dbReference type="GO" id="GO:0009376">
    <property type="term" value="C:HslUV protease complex"/>
    <property type="evidence" value="ECO:0007669"/>
    <property type="project" value="TreeGrafter"/>
</dbReference>
<dbReference type="GO" id="GO:0005524">
    <property type="term" value="F:ATP binding"/>
    <property type="evidence" value="ECO:0007669"/>
    <property type="project" value="UniProtKB-UniRule"/>
</dbReference>
<dbReference type="GO" id="GO:0016887">
    <property type="term" value="F:ATP hydrolysis activity"/>
    <property type="evidence" value="ECO:0007669"/>
    <property type="project" value="InterPro"/>
</dbReference>
<dbReference type="GO" id="GO:0140662">
    <property type="term" value="F:ATP-dependent protein folding chaperone"/>
    <property type="evidence" value="ECO:0007669"/>
    <property type="project" value="InterPro"/>
</dbReference>
<dbReference type="GO" id="GO:0046983">
    <property type="term" value="F:protein dimerization activity"/>
    <property type="evidence" value="ECO:0007669"/>
    <property type="project" value="InterPro"/>
</dbReference>
<dbReference type="GO" id="GO:0051082">
    <property type="term" value="F:unfolded protein binding"/>
    <property type="evidence" value="ECO:0007669"/>
    <property type="project" value="UniProtKB-UniRule"/>
</dbReference>
<dbReference type="GO" id="GO:0008270">
    <property type="term" value="F:zinc ion binding"/>
    <property type="evidence" value="ECO:0007669"/>
    <property type="project" value="InterPro"/>
</dbReference>
<dbReference type="GO" id="GO:0051301">
    <property type="term" value="P:cell division"/>
    <property type="evidence" value="ECO:0007669"/>
    <property type="project" value="TreeGrafter"/>
</dbReference>
<dbReference type="GO" id="GO:0051603">
    <property type="term" value="P:proteolysis involved in protein catabolic process"/>
    <property type="evidence" value="ECO:0007669"/>
    <property type="project" value="TreeGrafter"/>
</dbReference>
<dbReference type="CDD" id="cd19497">
    <property type="entry name" value="RecA-like_ClpX"/>
    <property type="match status" value="1"/>
</dbReference>
<dbReference type="FunFam" id="1.10.8.60:FF:000002">
    <property type="entry name" value="ATP-dependent Clp protease ATP-binding subunit ClpX"/>
    <property type="match status" value="1"/>
</dbReference>
<dbReference type="FunFam" id="3.40.50.300:FF:000005">
    <property type="entry name" value="ATP-dependent Clp protease ATP-binding subunit ClpX"/>
    <property type="match status" value="1"/>
</dbReference>
<dbReference type="Gene3D" id="1.10.8.60">
    <property type="match status" value="1"/>
</dbReference>
<dbReference type="Gene3D" id="6.20.220.10">
    <property type="entry name" value="ClpX chaperone, C4-type zinc finger domain"/>
    <property type="match status" value="1"/>
</dbReference>
<dbReference type="Gene3D" id="3.40.50.300">
    <property type="entry name" value="P-loop containing nucleotide triphosphate hydrolases"/>
    <property type="match status" value="1"/>
</dbReference>
<dbReference type="HAMAP" id="MF_00175">
    <property type="entry name" value="ClpX"/>
    <property type="match status" value="1"/>
</dbReference>
<dbReference type="InterPro" id="IPR003593">
    <property type="entry name" value="AAA+_ATPase"/>
</dbReference>
<dbReference type="InterPro" id="IPR050052">
    <property type="entry name" value="ATP-dep_Clp_protease_ClpX"/>
</dbReference>
<dbReference type="InterPro" id="IPR003959">
    <property type="entry name" value="ATPase_AAA_core"/>
</dbReference>
<dbReference type="InterPro" id="IPR019489">
    <property type="entry name" value="Clp_ATPase_C"/>
</dbReference>
<dbReference type="InterPro" id="IPR004487">
    <property type="entry name" value="Clp_protease_ATP-bd_su_ClpX"/>
</dbReference>
<dbReference type="InterPro" id="IPR046425">
    <property type="entry name" value="ClpX_bact"/>
</dbReference>
<dbReference type="InterPro" id="IPR027417">
    <property type="entry name" value="P-loop_NTPase"/>
</dbReference>
<dbReference type="InterPro" id="IPR010603">
    <property type="entry name" value="Znf_CppX_C4"/>
</dbReference>
<dbReference type="InterPro" id="IPR038366">
    <property type="entry name" value="Znf_CppX_C4_sf"/>
</dbReference>
<dbReference type="NCBIfam" id="TIGR00382">
    <property type="entry name" value="clpX"/>
    <property type="match status" value="1"/>
</dbReference>
<dbReference type="NCBIfam" id="NF003745">
    <property type="entry name" value="PRK05342.1"/>
    <property type="match status" value="1"/>
</dbReference>
<dbReference type="PANTHER" id="PTHR48102:SF7">
    <property type="entry name" value="ATP-DEPENDENT CLP PROTEASE ATP-BINDING SUBUNIT CLPX-LIKE, MITOCHONDRIAL"/>
    <property type="match status" value="1"/>
</dbReference>
<dbReference type="PANTHER" id="PTHR48102">
    <property type="entry name" value="ATP-DEPENDENT CLP PROTEASE ATP-BINDING SUBUNIT CLPX-LIKE, MITOCHONDRIAL-RELATED"/>
    <property type="match status" value="1"/>
</dbReference>
<dbReference type="Pfam" id="PF07724">
    <property type="entry name" value="AAA_2"/>
    <property type="match status" value="1"/>
</dbReference>
<dbReference type="Pfam" id="PF10431">
    <property type="entry name" value="ClpB_D2-small"/>
    <property type="match status" value="1"/>
</dbReference>
<dbReference type="Pfam" id="PF06689">
    <property type="entry name" value="zf-C4_ClpX"/>
    <property type="match status" value="1"/>
</dbReference>
<dbReference type="SMART" id="SM00382">
    <property type="entry name" value="AAA"/>
    <property type="match status" value="1"/>
</dbReference>
<dbReference type="SMART" id="SM01086">
    <property type="entry name" value="ClpB_D2-small"/>
    <property type="match status" value="1"/>
</dbReference>
<dbReference type="SMART" id="SM00994">
    <property type="entry name" value="zf-C4_ClpX"/>
    <property type="match status" value="1"/>
</dbReference>
<dbReference type="SUPFAM" id="SSF57716">
    <property type="entry name" value="Glucocorticoid receptor-like (DNA-binding domain)"/>
    <property type="match status" value="1"/>
</dbReference>
<dbReference type="SUPFAM" id="SSF52540">
    <property type="entry name" value="P-loop containing nucleoside triphosphate hydrolases"/>
    <property type="match status" value="1"/>
</dbReference>
<dbReference type="PROSITE" id="PS51902">
    <property type="entry name" value="CLPX_ZB"/>
    <property type="match status" value="1"/>
</dbReference>
<feature type="chain" id="PRO_1000097969" description="ATP-dependent Clp protease ATP-binding subunit ClpX">
    <location>
        <begin position="1"/>
        <end position="423"/>
    </location>
</feature>
<feature type="domain" description="ClpX-type ZB" evidence="2">
    <location>
        <begin position="3"/>
        <end position="56"/>
    </location>
</feature>
<feature type="binding site" evidence="2">
    <location>
        <position position="15"/>
    </location>
    <ligand>
        <name>Zn(2+)</name>
        <dbReference type="ChEBI" id="CHEBI:29105"/>
    </ligand>
</feature>
<feature type="binding site" evidence="2">
    <location>
        <position position="18"/>
    </location>
    <ligand>
        <name>Zn(2+)</name>
        <dbReference type="ChEBI" id="CHEBI:29105"/>
    </ligand>
</feature>
<feature type="binding site" evidence="2">
    <location>
        <position position="37"/>
    </location>
    <ligand>
        <name>Zn(2+)</name>
        <dbReference type="ChEBI" id="CHEBI:29105"/>
    </ligand>
</feature>
<feature type="binding site" evidence="2">
    <location>
        <position position="40"/>
    </location>
    <ligand>
        <name>Zn(2+)</name>
        <dbReference type="ChEBI" id="CHEBI:29105"/>
    </ligand>
</feature>
<feature type="binding site" evidence="1">
    <location>
        <begin position="119"/>
        <end position="126"/>
    </location>
    <ligand>
        <name>ATP</name>
        <dbReference type="ChEBI" id="CHEBI:30616"/>
    </ligand>
</feature>
<reference key="1">
    <citation type="submission" date="2008-03" db="EMBL/GenBank/DDBJ databases">
        <title>Complete sequence of chromosome of Methylobacterium radiotolerans JCM 2831.</title>
        <authorList>
            <consortium name="US DOE Joint Genome Institute"/>
            <person name="Copeland A."/>
            <person name="Lucas S."/>
            <person name="Lapidus A."/>
            <person name="Glavina del Rio T."/>
            <person name="Dalin E."/>
            <person name="Tice H."/>
            <person name="Bruce D."/>
            <person name="Goodwin L."/>
            <person name="Pitluck S."/>
            <person name="Kiss H."/>
            <person name="Brettin T."/>
            <person name="Detter J.C."/>
            <person name="Han C."/>
            <person name="Kuske C.R."/>
            <person name="Schmutz J."/>
            <person name="Larimer F."/>
            <person name="Land M."/>
            <person name="Hauser L."/>
            <person name="Kyrpides N."/>
            <person name="Mikhailova N."/>
            <person name="Marx C.J."/>
            <person name="Richardson P."/>
        </authorList>
    </citation>
    <scope>NUCLEOTIDE SEQUENCE [LARGE SCALE GENOMIC DNA]</scope>
    <source>
        <strain>ATCC 27329 / DSM 1819 / JCM 2831 / NBRC 15690 / NCIMB 10815 / 0-1</strain>
    </source>
</reference>
<protein>
    <recommendedName>
        <fullName evidence="1">ATP-dependent Clp protease ATP-binding subunit ClpX</fullName>
    </recommendedName>
</protein>
<accession>B1LW29</accession>
<keyword id="KW-0067">ATP-binding</keyword>
<keyword id="KW-0143">Chaperone</keyword>
<keyword id="KW-0479">Metal-binding</keyword>
<keyword id="KW-0547">Nucleotide-binding</keyword>
<keyword id="KW-0862">Zinc</keyword>
<proteinExistence type="inferred from homology"/>
<organism>
    <name type="scientific">Methylobacterium radiotolerans (strain ATCC 27329 / DSM 1819 / JCM 2831 / NBRC 15690 / NCIMB 10815 / 0-1)</name>
    <dbReference type="NCBI Taxonomy" id="426355"/>
    <lineage>
        <taxon>Bacteria</taxon>
        <taxon>Pseudomonadati</taxon>
        <taxon>Pseudomonadota</taxon>
        <taxon>Alphaproteobacteria</taxon>
        <taxon>Hyphomicrobiales</taxon>
        <taxon>Methylobacteriaceae</taxon>
        <taxon>Methylobacterium</taxon>
    </lineage>
</organism>
<sequence>MSKTGGNDSKSTLYCSFCGKSQHEVRKLIAGPTVFICDECVELCMDIIREESKSSLVKSRDGVPTPKEIRRVLDDYVIGQDFAKKVLSVAVHNHYKRLAHATKHNDVELAKSNIMLIGPTGSGKTLLAQTLARILDVPFTMADATTLTEAGYVGEDVENIILKLLQASDYNVERAQRGIVYIDEIDKISRKSDNPSITRDVSGEGVQQALLKIMEGTVASVPPQGGRKHPQQEFLQVDTTNILFICGGAFAGLERIISQRGKGTSIGFGATVQAPDDRRTGEIFRSVEPEDLLKFGLIPEFVGRLPVLATLEDLDEAALKKILQEPKNALVKQYQRLFEMENVDLTFQDEALSLVARKAIERKTGARGLRSILETILLDTMYDLPGLESVEQVVIGPEVVEGKSRPLYIHGDRNKDAPASVSA</sequence>